<protein>
    <recommendedName>
        <fullName evidence="1">ATP-dependent 6-phosphofructokinase</fullName>
        <shortName evidence="1">ATP-PFK</shortName>
        <shortName evidence="1">Phosphofructokinase</shortName>
        <ecNumber evidence="1">2.7.1.11</ecNumber>
    </recommendedName>
    <alternativeName>
        <fullName evidence="1">Phosphohexokinase</fullName>
    </alternativeName>
</protein>
<reference key="1">
    <citation type="journal article" date="2008" name="PLoS Genet.">
        <title>Complete genome sequence of the N2-fixing broad host range endophyte Klebsiella pneumoniae 342 and virulence predictions verified in mice.</title>
        <authorList>
            <person name="Fouts D.E."/>
            <person name="Tyler H.L."/>
            <person name="DeBoy R.T."/>
            <person name="Daugherty S."/>
            <person name="Ren Q."/>
            <person name="Badger J.H."/>
            <person name="Durkin A.S."/>
            <person name="Huot H."/>
            <person name="Shrivastava S."/>
            <person name="Kothari S."/>
            <person name="Dodson R.J."/>
            <person name="Mohamoud Y."/>
            <person name="Khouri H."/>
            <person name="Roesch L.F.W."/>
            <person name="Krogfelt K.A."/>
            <person name="Struve C."/>
            <person name="Triplett E.W."/>
            <person name="Methe B.A."/>
        </authorList>
    </citation>
    <scope>NUCLEOTIDE SEQUENCE [LARGE SCALE GENOMIC DNA]</scope>
    <source>
        <strain>342</strain>
    </source>
</reference>
<proteinExistence type="inferred from homology"/>
<feature type="chain" id="PRO_1000120047" description="ATP-dependent 6-phosphofructokinase">
    <location>
        <begin position="1"/>
        <end position="320"/>
    </location>
</feature>
<feature type="active site" description="Proton acceptor" evidence="1">
    <location>
        <position position="128"/>
    </location>
</feature>
<feature type="binding site" evidence="1">
    <location>
        <position position="12"/>
    </location>
    <ligand>
        <name>ATP</name>
        <dbReference type="ChEBI" id="CHEBI:30616"/>
    </ligand>
</feature>
<feature type="binding site" evidence="1">
    <location>
        <begin position="22"/>
        <end position="26"/>
    </location>
    <ligand>
        <name>ADP</name>
        <dbReference type="ChEBI" id="CHEBI:456216"/>
        <note>allosteric activator; ligand shared between dimeric partners</note>
    </ligand>
</feature>
<feature type="binding site" evidence="1">
    <location>
        <begin position="55"/>
        <end position="60"/>
    </location>
    <ligand>
        <name>ADP</name>
        <dbReference type="ChEBI" id="CHEBI:456216"/>
        <note>allosteric activator; ligand shared between dimeric partners</note>
    </ligand>
</feature>
<feature type="binding site" evidence="1">
    <location>
        <begin position="73"/>
        <end position="74"/>
    </location>
    <ligand>
        <name>ATP</name>
        <dbReference type="ChEBI" id="CHEBI:30616"/>
    </ligand>
</feature>
<feature type="binding site" evidence="1">
    <location>
        <begin position="103"/>
        <end position="106"/>
    </location>
    <ligand>
        <name>ATP</name>
        <dbReference type="ChEBI" id="CHEBI:30616"/>
    </ligand>
</feature>
<feature type="binding site" evidence="1">
    <location>
        <position position="104"/>
    </location>
    <ligand>
        <name>Mg(2+)</name>
        <dbReference type="ChEBI" id="CHEBI:18420"/>
        <note>catalytic</note>
    </ligand>
</feature>
<feature type="binding site" description="in other chain" evidence="1">
    <location>
        <begin position="126"/>
        <end position="128"/>
    </location>
    <ligand>
        <name>substrate</name>
        <note>ligand shared between dimeric partners</note>
    </ligand>
</feature>
<feature type="binding site" description="in other chain" evidence="1">
    <location>
        <position position="155"/>
    </location>
    <ligand>
        <name>ADP</name>
        <dbReference type="ChEBI" id="CHEBI:456216"/>
        <note>allosteric activator; ligand shared between dimeric partners</note>
    </ligand>
</feature>
<feature type="binding site" evidence="1">
    <location>
        <position position="163"/>
    </location>
    <ligand>
        <name>substrate</name>
        <note>ligand shared between dimeric partners</note>
    </ligand>
</feature>
<feature type="binding site" description="in other chain" evidence="1">
    <location>
        <begin position="170"/>
        <end position="172"/>
    </location>
    <ligand>
        <name>substrate</name>
        <note>ligand shared between dimeric partners</note>
    </ligand>
</feature>
<feature type="binding site" description="in other chain" evidence="1">
    <location>
        <begin position="186"/>
        <end position="188"/>
    </location>
    <ligand>
        <name>ADP</name>
        <dbReference type="ChEBI" id="CHEBI:456216"/>
        <note>allosteric activator; ligand shared between dimeric partners</note>
    </ligand>
</feature>
<feature type="binding site" description="in other chain" evidence="1">
    <location>
        <position position="212"/>
    </location>
    <ligand>
        <name>ADP</name>
        <dbReference type="ChEBI" id="CHEBI:456216"/>
        <note>allosteric activator; ligand shared between dimeric partners</note>
    </ligand>
</feature>
<feature type="binding site" description="in other chain" evidence="1">
    <location>
        <begin position="214"/>
        <end position="216"/>
    </location>
    <ligand>
        <name>ADP</name>
        <dbReference type="ChEBI" id="CHEBI:456216"/>
        <note>allosteric activator; ligand shared between dimeric partners</note>
    </ligand>
</feature>
<feature type="binding site" description="in other chain" evidence="1">
    <location>
        <position position="223"/>
    </location>
    <ligand>
        <name>substrate</name>
        <note>ligand shared between dimeric partners</note>
    </ligand>
</feature>
<feature type="binding site" evidence="1">
    <location>
        <position position="244"/>
    </location>
    <ligand>
        <name>substrate</name>
        <note>ligand shared between dimeric partners</note>
    </ligand>
</feature>
<feature type="binding site" description="in other chain" evidence="1">
    <location>
        <begin position="250"/>
        <end position="253"/>
    </location>
    <ligand>
        <name>substrate</name>
        <note>ligand shared between dimeric partners</note>
    </ligand>
</feature>
<dbReference type="EC" id="2.7.1.11" evidence="1"/>
<dbReference type="EMBL" id="CP000964">
    <property type="protein sequence ID" value="ACI08666.1"/>
    <property type="molecule type" value="Genomic_DNA"/>
</dbReference>
<dbReference type="SMR" id="B5XZ40"/>
<dbReference type="KEGG" id="kpe:KPK_5456"/>
<dbReference type="HOGENOM" id="CLU_020655_0_1_6"/>
<dbReference type="UniPathway" id="UPA00109">
    <property type="reaction ID" value="UER00182"/>
</dbReference>
<dbReference type="Proteomes" id="UP000001734">
    <property type="component" value="Chromosome"/>
</dbReference>
<dbReference type="GO" id="GO:0005945">
    <property type="term" value="C:6-phosphofructokinase complex"/>
    <property type="evidence" value="ECO:0007669"/>
    <property type="project" value="TreeGrafter"/>
</dbReference>
<dbReference type="GO" id="GO:0003872">
    <property type="term" value="F:6-phosphofructokinase activity"/>
    <property type="evidence" value="ECO:0007669"/>
    <property type="project" value="UniProtKB-UniRule"/>
</dbReference>
<dbReference type="GO" id="GO:0016208">
    <property type="term" value="F:AMP binding"/>
    <property type="evidence" value="ECO:0007669"/>
    <property type="project" value="TreeGrafter"/>
</dbReference>
<dbReference type="GO" id="GO:0005524">
    <property type="term" value="F:ATP binding"/>
    <property type="evidence" value="ECO:0007669"/>
    <property type="project" value="UniProtKB-KW"/>
</dbReference>
<dbReference type="GO" id="GO:0070095">
    <property type="term" value="F:fructose-6-phosphate binding"/>
    <property type="evidence" value="ECO:0007669"/>
    <property type="project" value="TreeGrafter"/>
</dbReference>
<dbReference type="GO" id="GO:0042802">
    <property type="term" value="F:identical protein binding"/>
    <property type="evidence" value="ECO:0007669"/>
    <property type="project" value="TreeGrafter"/>
</dbReference>
<dbReference type="GO" id="GO:0046872">
    <property type="term" value="F:metal ion binding"/>
    <property type="evidence" value="ECO:0007669"/>
    <property type="project" value="UniProtKB-KW"/>
</dbReference>
<dbReference type="GO" id="GO:0048029">
    <property type="term" value="F:monosaccharide binding"/>
    <property type="evidence" value="ECO:0007669"/>
    <property type="project" value="TreeGrafter"/>
</dbReference>
<dbReference type="GO" id="GO:0061621">
    <property type="term" value="P:canonical glycolysis"/>
    <property type="evidence" value="ECO:0007669"/>
    <property type="project" value="TreeGrafter"/>
</dbReference>
<dbReference type="GO" id="GO:0030388">
    <property type="term" value="P:fructose 1,6-bisphosphate metabolic process"/>
    <property type="evidence" value="ECO:0007669"/>
    <property type="project" value="TreeGrafter"/>
</dbReference>
<dbReference type="GO" id="GO:0006002">
    <property type="term" value="P:fructose 6-phosphate metabolic process"/>
    <property type="evidence" value="ECO:0007669"/>
    <property type="project" value="InterPro"/>
</dbReference>
<dbReference type="CDD" id="cd00763">
    <property type="entry name" value="Bacterial_PFK"/>
    <property type="match status" value="1"/>
</dbReference>
<dbReference type="FunFam" id="3.40.50.450:FF:000001">
    <property type="entry name" value="ATP-dependent 6-phosphofructokinase"/>
    <property type="match status" value="1"/>
</dbReference>
<dbReference type="FunFam" id="3.40.50.460:FF:000002">
    <property type="entry name" value="ATP-dependent 6-phosphofructokinase"/>
    <property type="match status" value="1"/>
</dbReference>
<dbReference type="Gene3D" id="3.40.50.450">
    <property type="match status" value="1"/>
</dbReference>
<dbReference type="Gene3D" id="3.40.50.460">
    <property type="entry name" value="Phosphofructokinase domain"/>
    <property type="match status" value="1"/>
</dbReference>
<dbReference type="HAMAP" id="MF_00339">
    <property type="entry name" value="Phosphofructokinase_I_B1"/>
    <property type="match status" value="1"/>
</dbReference>
<dbReference type="InterPro" id="IPR022953">
    <property type="entry name" value="ATP_PFK"/>
</dbReference>
<dbReference type="InterPro" id="IPR012003">
    <property type="entry name" value="ATP_PFK_prok-type"/>
</dbReference>
<dbReference type="InterPro" id="IPR012828">
    <property type="entry name" value="PFKA_ATP_prok"/>
</dbReference>
<dbReference type="InterPro" id="IPR015912">
    <property type="entry name" value="Phosphofructokinase_CS"/>
</dbReference>
<dbReference type="InterPro" id="IPR000023">
    <property type="entry name" value="Phosphofructokinase_dom"/>
</dbReference>
<dbReference type="InterPro" id="IPR035966">
    <property type="entry name" value="PKF_sf"/>
</dbReference>
<dbReference type="NCBIfam" id="TIGR02482">
    <property type="entry name" value="PFKA_ATP"/>
    <property type="match status" value="1"/>
</dbReference>
<dbReference type="NCBIfam" id="NF002872">
    <property type="entry name" value="PRK03202.1"/>
    <property type="match status" value="1"/>
</dbReference>
<dbReference type="PANTHER" id="PTHR13697:SF4">
    <property type="entry name" value="ATP-DEPENDENT 6-PHOSPHOFRUCTOKINASE"/>
    <property type="match status" value="1"/>
</dbReference>
<dbReference type="PANTHER" id="PTHR13697">
    <property type="entry name" value="PHOSPHOFRUCTOKINASE"/>
    <property type="match status" value="1"/>
</dbReference>
<dbReference type="Pfam" id="PF00365">
    <property type="entry name" value="PFK"/>
    <property type="match status" value="1"/>
</dbReference>
<dbReference type="PIRSF" id="PIRSF000532">
    <property type="entry name" value="ATP_PFK_prok"/>
    <property type="match status" value="1"/>
</dbReference>
<dbReference type="PRINTS" id="PR00476">
    <property type="entry name" value="PHFRCTKINASE"/>
</dbReference>
<dbReference type="SUPFAM" id="SSF53784">
    <property type="entry name" value="Phosphofructokinase"/>
    <property type="match status" value="1"/>
</dbReference>
<dbReference type="PROSITE" id="PS00433">
    <property type="entry name" value="PHOSPHOFRUCTOKINASE"/>
    <property type="match status" value="1"/>
</dbReference>
<gene>
    <name evidence="1" type="primary">pfkA</name>
    <name type="ordered locus">KPK_5456</name>
</gene>
<organism>
    <name type="scientific">Klebsiella pneumoniae (strain 342)</name>
    <dbReference type="NCBI Taxonomy" id="507522"/>
    <lineage>
        <taxon>Bacteria</taxon>
        <taxon>Pseudomonadati</taxon>
        <taxon>Pseudomonadota</taxon>
        <taxon>Gammaproteobacteria</taxon>
        <taxon>Enterobacterales</taxon>
        <taxon>Enterobacteriaceae</taxon>
        <taxon>Klebsiella/Raoultella group</taxon>
        <taxon>Klebsiella</taxon>
        <taxon>Klebsiella pneumoniae complex</taxon>
    </lineage>
</organism>
<sequence>MIKKIGVLTSGGDAPGMNAAIRGVVRAALTEGLEVFGIYDGYLGLYEDRMVQLDRYSVSDMINRGGTFLGSARFPEFREEHIRAVAIENMKKRGLDALVVIGGDGSYMGAMRLTEMGFPCIGLPGTIDNDIKGTDYTIGFFTALSTVVEAIDRLRDTSSSHQRISVVEVMGRYCGDLTLAAAIAGGCEFIMVPEVEYTRDDLVAEIKAGIAKGKKHAIVAITEHMCDVDELASYIEKETGRETRATVLGHIQRGGSPVPYDRILASRMGAYAIELLLQGHGGRCVGIQNEKLVHHDIIDAIENMKRPFKNDWLDCAKKLY</sequence>
<name>PFKA_KLEP3</name>
<accession>B5XZ40</accession>
<evidence type="ECO:0000255" key="1">
    <source>
        <dbReference type="HAMAP-Rule" id="MF_00339"/>
    </source>
</evidence>
<comment type="function">
    <text evidence="1">Catalyzes the phosphorylation of D-fructose 6-phosphate to fructose 1,6-bisphosphate by ATP, the first committing step of glycolysis.</text>
</comment>
<comment type="catalytic activity">
    <reaction evidence="1">
        <text>beta-D-fructose 6-phosphate + ATP = beta-D-fructose 1,6-bisphosphate + ADP + H(+)</text>
        <dbReference type="Rhea" id="RHEA:16109"/>
        <dbReference type="ChEBI" id="CHEBI:15378"/>
        <dbReference type="ChEBI" id="CHEBI:30616"/>
        <dbReference type="ChEBI" id="CHEBI:32966"/>
        <dbReference type="ChEBI" id="CHEBI:57634"/>
        <dbReference type="ChEBI" id="CHEBI:456216"/>
        <dbReference type="EC" id="2.7.1.11"/>
    </reaction>
</comment>
<comment type="cofactor">
    <cofactor evidence="1">
        <name>Mg(2+)</name>
        <dbReference type="ChEBI" id="CHEBI:18420"/>
    </cofactor>
</comment>
<comment type="activity regulation">
    <text evidence="1">Allosterically activated by ADP and other diphosphonucleosides, and allosterically inhibited by phosphoenolpyruvate.</text>
</comment>
<comment type="pathway">
    <text evidence="1">Carbohydrate degradation; glycolysis; D-glyceraldehyde 3-phosphate and glycerone phosphate from D-glucose: step 3/4.</text>
</comment>
<comment type="subunit">
    <text evidence="1">Homotetramer.</text>
</comment>
<comment type="subcellular location">
    <subcellularLocation>
        <location evidence="1">Cytoplasm</location>
    </subcellularLocation>
</comment>
<comment type="similarity">
    <text evidence="1">Belongs to the phosphofructokinase type A (PFKA) family. ATP-dependent PFK group I subfamily. Prokaryotic clade 'B1' sub-subfamily.</text>
</comment>
<keyword id="KW-0021">Allosteric enzyme</keyword>
<keyword id="KW-0067">ATP-binding</keyword>
<keyword id="KW-0963">Cytoplasm</keyword>
<keyword id="KW-0324">Glycolysis</keyword>
<keyword id="KW-0418">Kinase</keyword>
<keyword id="KW-0460">Magnesium</keyword>
<keyword id="KW-0479">Metal-binding</keyword>
<keyword id="KW-0547">Nucleotide-binding</keyword>
<keyword id="KW-0808">Transferase</keyword>